<comment type="function">
    <text evidence="1">Catalyzes the attachment of valine to tRNA(Val). As ValRS can inadvertently accommodate and process structurally similar amino acids such as threonine, to avoid such errors, it has a 'posttransfer' editing activity that hydrolyzes mischarged Thr-tRNA(Val) in a tRNA-dependent manner.</text>
</comment>
<comment type="catalytic activity">
    <reaction evidence="1">
        <text>tRNA(Val) + L-valine + ATP = L-valyl-tRNA(Val) + AMP + diphosphate</text>
        <dbReference type="Rhea" id="RHEA:10704"/>
        <dbReference type="Rhea" id="RHEA-COMP:9672"/>
        <dbReference type="Rhea" id="RHEA-COMP:9708"/>
        <dbReference type="ChEBI" id="CHEBI:30616"/>
        <dbReference type="ChEBI" id="CHEBI:33019"/>
        <dbReference type="ChEBI" id="CHEBI:57762"/>
        <dbReference type="ChEBI" id="CHEBI:78442"/>
        <dbReference type="ChEBI" id="CHEBI:78537"/>
        <dbReference type="ChEBI" id="CHEBI:456215"/>
        <dbReference type="EC" id="6.1.1.9"/>
    </reaction>
</comment>
<comment type="subunit">
    <text evidence="1">Monomer.</text>
</comment>
<comment type="subcellular location">
    <subcellularLocation>
        <location evidence="1">Cytoplasm</location>
    </subcellularLocation>
</comment>
<comment type="domain">
    <text evidence="1">ValRS has two distinct active sites: one for aminoacylation and one for editing. The misactivated threonine is translocated from the active site to the editing site.</text>
</comment>
<comment type="domain">
    <text evidence="1">The C-terminal coiled-coil domain is crucial for aminoacylation activity.</text>
</comment>
<comment type="similarity">
    <text evidence="1">Belongs to the class-I aminoacyl-tRNA synthetase family. ValS type 1 subfamily.</text>
</comment>
<protein>
    <recommendedName>
        <fullName evidence="1">Valine--tRNA ligase</fullName>
        <ecNumber evidence="1">6.1.1.9</ecNumber>
    </recommendedName>
    <alternativeName>
        <fullName evidence="1">Valyl-tRNA synthetase</fullName>
        <shortName evidence="1">ValRS</shortName>
    </alternativeName>
</protein>
<evidence type="ECO:0000255" key="1">
    <source>
        <dbReference type="HAMAP-Rule" id="MF_02004"/>
    </source>
</evidence>
<accession>Q5FN28</accession>
<keyword id="KW-0030">Aminoacyl-tRNA synthetase</keyword>
<keyword id="KW-0067">ATP-binding</keyword>
<keyword id="KW-0175">Coiled coil</keyword>
<keyword id="KW-0963">Cytoplasm</keyword>
<keyword id="KW-0436">Ligase</keyword>
<keyword id="KW-0547">Nucleotide-binding</keyword>
<keyword id="KW-0648">Protein biosynthesis</keyword>
<keyword id="KW-1185">Reference proteome</keyword>
<dbReference type="EC" id="6.1.1.9" evidence="1"/>
<dbReference type="EMBL" id="CP000009">
    <property type="protein sequence ID" value="AAW62219.1"/>
    <property type="molecule type" value="Genomic_DNA"/>
</dbReference>
<dbReference type="RefSeq" id="WP_011253986.1">
    <property type="nucleotide sequence ID" value="NC_006677.1"/>
</dbReference>
<dbReference type="SMR" id="Q5FN28"/>
<dbReference type="STRING" id="290633.GOX2489"/>
<dbReference type="KEGG" id="gox:GOX2489"/>
<dbReference type="eggNOG" id="COG0525">
    <property type="taxonomic scope" value="Bacteria"/>
</dbReference>
<dbReference type="HOGENOM" id="CLU_001493_0_2_5"/>
<dbReference type="Proteomes" id="UP000006375">
    <property type="component" value="Chromosome"/>
</dbReference>
<dbReference type="GO" id="GO:0005829">
    <property type="term" value="C:cytosol"/>
    <property type="evidence" value="ECO:0007669"/>
    <property type="project" value="TreeGrafter"/>
</dbReference>
<dbReference type="GO" id="GO:0002161">
    <property type="term" value="F:aminoacyl-tRNA deacylase activity"/>
    <property type="evidence" value="ECO:0007669"/>
    <property type="project" value="InterPro"/>
</dbReference>
<dbReference type="GO" id="GO:0005524">
    <property type="term" value="F:ATP binding"/>
    <property type="evidence" value="ECO:0007669"/>
    <property type="project" value="UniProtKB-UniRule"/>
</dbReference>
<dbReference type="GO" id="GO:0004832">
    <property type="term" value="F:valine-tRNA ligase activity"/>
    <property type="evidence" value="ECO:0007669"/>
    <property type="project" value="UniProtKB-UniRule"/>
</dbReference>
<dbReference type="GO" id="GO:0006438">
    <property type="term" value="P:valyl-tRNA aminoacylation"/>
    <property type="evidence" value="ECO:0007669"/>
    <property type="project" value="UniProtKB-UniRule"/>
</dbReference>
<dbReference type="CDD" id="cd07962">
    <property type="entry name" value="Anticodon_Ia_Val"/>
    <property type="match status" value="1"/>
</dbReference>
<dbReference type="CDD" id="cd00817">
    <property type="entry name" value="ValRS_core"/>
    <property type="match status" value="1"/>
</dbReference>
<dbReference type="FunFam" id="1.10.287.380:FF:000001">
    <property type="entry name" value="Valine--tRNA ligase"/>
    <property type="match status" value="1"/>
</dbReference>
<dbReference type="FunFam" id="3.40.50.620:FF:000032">
    <property type="entry name" value="Valine--tRNA ligase"/>
    <property type="match status" value="1"/>
</dbReference>
<dbReference type="FunFam" id="3.40.50.620:FF:000098">
    <property type="entry name" value="Valine--tRNA ligase"/>
    <property type="match status" value="1"/>
</dbReference>
<dbReference type="Gene3D" id="3.40.50.620">
    <property type="entry name" value="HUPs"/>
    <property type="match status" value="2"/>
</dbReference>
<dbReference type="Gene3D" id="1.10.730.10">
    <property type="entry name" value="Isoleucyl-tRNA Synthetase, Domain 1"/>
    <property type="match status" value="1"/>
</dbReference>
<dbReference type="Gene3D" id="1.10.287.380">
    <property type="entry name" value="Valyl-tRNA synthetase, C-terminal domain"/>
    <property type="match status" value="1"/>
</dbReference>
<dbReference type="HAMAP" id="MF_02004">
    <property type="entry name" value="Val_tRNA_synth_type1"/>
    <property type="match status" value="1"/>
</dbReference>
<dbReference type="InterPro" id="IPR001412">
    <property type="entry name" value="aa-tRNA-synth_I_CS"/>
</dbReference>
<dbReference type="InterPro" id="IPR002300">
    <property type="entry name" value="aa-tRNA-synth_Ia"/>
</dbReference>
<dbReference type="InterPro" id="IPR033705">
    <property type="entry name" value="Anticodon_Ia_Val"/>
</dbReference>
<dbReference type="InterPro" id="IPR013155">
    <property type="entry name" value="M/V/L/I-tRNA-synth_anticd-bd"/>
</dbReference>
<dbReference type="InterPro" id="IPR014729">
    <property type="entry name" value="Rossmann-like_a/b/a_fold"/>
</dbReference>
<dbReference type="InterPro" id="IPR010978">
    <property type="entry name" value="tRNA-bd_arm"/>
</dbReference>
<dbReference type="InterPro" id="IPR009080">
    <property type="entry name" value="tRNAsynth_Ia_anticodon-bd"/>
</dbReference>
<dbReference type="InterPro" id="IPR037118">
    <property type="entry name" value="Val-tRNA_synth_C_sf"/>
</dbReference>
<dbReference type="InterPro" id="IPR019499">
    <property type="entry name" value="Val-tRNA_synth_tRNA-bd"/>
</dbReference>
<dbReference type="InterPro" id="IPR009008">
    <property type="entry name" value="Val/Leu/Ile-tRNA-synth_edit"/>
</dbReference>
<dbReference type="InterPro" id="IPR002303">
    <property type="entry name" value="Valyl-tRNA_ligase"/>
</dbReference>
<dbReference type="NCBIfam" id="NF004349">
    <property type="entry name" value="PRK05729.1"/>
    <property type="match status" value="1"/>
</dbReference>
<dbReference type="NCBIfam" id="TIGR00422">
    <property type="entry name" value="valS"/>
    <property type="match status" value="1"/>
</dbReference>
<dbReference type="PANTHER" id="PTHR11946:SF93">
    <property type="entry name" value="VALINE--TRNA LIGASE, CHLOROPLASTIC_MITOCHONDRIAL 2"/>
    <property type="match status" value="1"/>
</dbReference>
<dbReference type="PANTHER" id="PTHR11946">
    <property type="entry name" value="VALYL-TRNA SYNTHETASES"/>
    <property type="match status" value="1"/>
</dbReference>
<dbReference type="Pfam" id="PF08264">
    <property type="entry name" value="Anticodon_1"/>
    <property type="match status" value="1"/>
</dbReference>
<dbReference type="Pfam" id="PF00133">
    <property type="entry name" value="tRNA-synt_1"/>
    <property type="match status" value="1"/>
</dbReference>
<dbReference type="Pfam" id="PF10458">
    <property type="entry name" value="Val_tRNA-synt_C"/>
    <property type="match status" value="1"/>
</dbReference>
<dbReference type="PRINTS" id="PR00986">
    <property type="entry name" value="TRNASYNTHVAL"/>
</dbReference>
<dbReference type="SUPFAM" id="SSF47323">
    <property type="entry name" value="Anticodon-binding domain of a subclass of class I aminoacyl-tRNA synthetases"/>
    <property type="match status" value="1"/>
</dbReference>
<dbReference type="SUPFAM" id="SSF52374">
    <property type="entry name" value="Nucleotidylyl transferase"/>
    <property type="match status" value="1"/>
</dbReference>
<dbReference type="SUPFAM" id="SSF46589">
    <property type="entry name" value="tRNA-binding arm"/>
    <property type="match status" value="1"/>
</dbReference>
<dbReference type="SUPFAM" id="SSF50677">
    <property type="entry name" value="ValRS/IleRS/LeuRS editing domain"/>
    <property type="match status" value="1"/>
</dbReference>
<dbReference type="PROSITE" id="PS00178">
    <property type="entry name" value="AA_TRNA_LIGASE_I"/>
    <property type="match status" value="1"/>
</dbReference>
<reference key="1">
    <citation type="journal article" date="2005" name="Nat. Biotechnol.">
        <title>Complete genome sequence of the acetic acid bacterium Gluconobacter oxydans.</title>
        <authorList>
            <person name="Prust C."/>
            <person name="Hoffmeister M."/>
            <person name="Liesegang H."/>
            <person name="Wiezer A."/>
            <person name="Fricke W.F."/>
            <person name="Ehrenreich A."/>
            <person name="Gottschalk G."/>
            <person name="Deppenmeier U."/>
        </authorList>
    </citation>
    <scope>NUCLEOTIDE SEQUENCE [LARGE SCALE GENOMIC DNA]</scope>
    <source>
        <strain>621H</strain>
    </source>
</reference>
<sequence length="888" mass="100683">MLEKSFVPADHENALYDAWEKSGAFRAHPDQPGEPFSIMFPPPNVTGTLHLGHSLNFVLQDMLIRWKRQEGFNVLWQPGTDHAGIATQMVVERALDKEGTSRTALGREGFLERVWDWKQEYGGTIVKQLRKLGASADWERERFTMDDGLSRAVRKVFVTLYNEGLIYRDRRLVNWDPKFRSAISDLEVENHETKGSMWYIRYPLEDGRTITVATTRPETMLGDVAVAVHPEDERYADMIGKTVILPLTGRRIPVVADLHSDPEKGTGAVKITPAHDFNDFEVGKRHDLPAPTVLDETACLWIEEIRPELRDVEGLASVAFVETLNGLSREEGRKQVVAELERLEWLEKIEPHKLQVPHAERGGAIVEPRLTLQWYCDAKTLSGPAVEAVESGKIAFEPRQWENTFHAWMRDIQPWCISRQLWWGHRIPAWYGADGKVYVAENEQDAQVQAGEGVSLTQDEDVLDTWFSSALWPFTTLGWPDRTEELARYYPTSVLVTGFDIIFFWVARMMMMGLHFMDDVPFRTVLIHGLVRDEKGQKMSKSKGNGLDPLDLVAEFGADATRLAICAGTGPGRDIKLGRKRVEEHRAFVTKLWNAARFLEMNGAKPTEDFDPASVKSALGRWILTEANDAITEAGRALSVYRFDEYASCCYRFVWSRFCDWFVEFSKPVFAAENEETAELRAVSAHVLGLILRLMQPVIPFVTATLWQELGYPGKFEEIRWPEIMTVTRADEARAELDWVIRLIGDVRTVRSEMNIPPSQKAPLLLRDAAPENLERAKTWAEAIGRMARVSDVGVVGEDAPRNAAQLVLDEATVFIPLEGLIDLDAERARLAKEITRIEGEILKVTRKLDNADFVARAKPEVVEENHDRLATFQSDLERLKAALGRLA</sequence>
<organism>
    <name type="scientific">Gluconobacter oxydans (strain 621H)</name>
    <name type="common">Gluconobacter suboxydans</name>
    <dbReference type="NCBI Taxonomy" id="290633"/>
    <lineage>
        <taxon>Bacteria</taxon>
        <taxon>Pseudomonadati</taxon>
        <taxon>Pseudomonadota</taxon>
        <taxon>Alphaproteobacteria</taxon>
        <taxon>Acetobacterales</taxon>
        <taxon>Acetobacteraceae</taxon>
        <taxon>Gluconobacter</taxon>
    </lineage>
</organism>
<feature type="chain" id="PRO_0000224484" description="Valine--tRNA ligase">
    <location>
        <begin position="1"/>
        <end position="888"/>
    </location>
</feature>
<feature type="coiled-coil region" evidence="1">
    <location>
        <begin position="821"/>
        <end position="888"/>
    </location>
</feature>
<feature type="short sequence motif" description="'HIGH' region">
    <location>
        <begin position="43"/>
        <end position="53"/>
    </location>
</feature>
<feature type="short sequence motif" description="'KMSKS' region">
    <location>
        <begin position="538"/>
        <end position="542"/>
    </location>
</feature>
<feature type="binding site" evidence="1">
    <location>
        <position position="541"/>
    </location>
    <ligand>
        <name>ATP</name>
        <dbReference type="ChEBI" id="CHEBI:30616"/>
    </ligand>
</feature>
<proteinExistence type="inferred from homology"/>
<name>SYV_GLUOX</name>
<gene>
    <name evidence="1" type="primary">valS</name>
    <name type="ordered locus">GOX2489</name>
</gene>